<feature type="chain" id="PRO_1000019387" description="Ferrochelatase">
    <location>
        <begin position="1"/>
        <end position="320"/>
    </location>
</feature>
<feature type="binding site" evidence="1">
    <location>
        <position position="194"/>
    </location>
    <ligand>
        <name>Fe cation</name>
        <dbReference type="ChEBI" id="CHEBI:24875"/>
    </ligand>
</feature>
<feature type="binding site" evidence="1">
    <location>
        <position position="275"/>
    </location>
    <ligand>
        <name>Fe cation</name>
        <dbReference type="ChEBI" id="CHEBI:24875"/>
    </ligand>
</feature>
<proteinExistence type="inferred from homology"/>
<evidence type="ECO:0000255" key="1">
    <source>
        <dbReference type="HAMAP-Rule" id="MF_00323"/>
    </source>
</evidence>
<protein>
    <recommendedName>
        <fullName evidence="1">Ferrochelatase</fullName>
        <ecNumber evidence="1">4.98.1.1</ecNumber>
    </recommendedName>
    <alternativeName>
        <fullName evidence="1">Heme synthase</fullName>
    </alternativeName>
    <alternativeName>
        <fullName evidence="1">Protoheme ferro-lyase</fullName>
    </alternativeName>
</protein>
<name>HEMH_YERPN</name>
<comment type="function">
    <text evidence="1">Catalyzes the ferrous insertion into protoporphyrin IX.</text>
</comment>
<comment type="catalytic activity">
    <reaction evidence="1">
        <text>heme b + 2 H(+) = protoporphyrin IX + Fe(2+)</text>
        <dbReference type="Rhea" id="RHEA:22584"/>
        <dbReference type="ChEBI" id="CHEBI:15378"/>
        <dbReference type="ChEBI" id="CHEBI:29033"/>
        <dbReference type="ChEBI" id="CHEBI:57306"/>
        <dbReference type="ChEBI" id="CHEBI:60344"/>
        <dbReference type="EC" id="4.98.1.1"/>
    </reaction>
</comment>
<comment type="pathway">
    <text evidence="1">Porphyrin-containing compound metabolism; protoheme biosynthesis; protoheme from protoporphyrin-IX: step 1/1.</text>
</comment>
<comment type="subcellular location">
    <subcellularLocation>
        <location evidence="1">Cytoplasm</location>
    </subcellularLocation>
</comment>
<comment type="similarity">
    <text evidence="1">Belongs to the ferrochelatase family.</text>
</comment>
<keyword id="KW-0963">Cytoplasm</keyword>
<keyword id="KW-0350">Heme biosynthesis</keyword>
<keyword id="KW-0408">Iron</keyword>
<keyword id="KW-0456">Lyase</keyword>
<keyword id="KW-0479">Metal-binding</keyword>
<keyword id="KW-0627">Porphyrin biosynthesis</keyword>
<gene>
    <name evidence="1" type="primary">hemH</name>
    <name type="ordered locus">YPN_0972</name>
    <name type="ORF">YP516_1054</name>
</gene>
<organism>
    <name type="scientific">Yersinia pestis bv. Antiqua (strain Nepal516)</name>
    <dbReference type="NCBI Taxonomy" id="377628"/>
    <lineage>
        <taxon>Bacteria</taxon>
        <taxon>Pseudomonadati</taxon>
        <taxon>Pseudomonadota</taxon>
        <taxon>Gammaproteobacteria</taxon>
        <taxon>Enterobacterales</taxon>
        <taxon>Yersiniaceae</taxon>
        <taxon>Yersinia</taxon>
    </lineage>
</organism>
<reference key="1">
    <citation type="journal article" date="2006" name="J. Bacteriol.">
        <title>Complete genome sequence of Yersinia pestis strains Antiqua and Nepal516: evidence of gene reduction in an emerging pathogen.</title>
        <authorList>
            <person name="Chain P.S.G."/>
            <person name="Hu P."/>
            <person name="Malfatti S.A."/>
            <person name="Radnedge L."/>
            <person name="Larimer F."/>
            <person name="Vergez L.M."/>
            <person name="Worsham P."/>
            <person name="Chu M.C."/>
            <person name="Andersen G.L."/>
        </authorList>
    </citation>
    <scope>NUCLEOTIDE SEQUENCE [LARGE SCALE GENOMIC DNA]</scope>
    <source>
        <strain>Nepal516</strain>
    </source>
</reference>
<reference key="2">
    <citation type="submission" date="2009-04" db="EMBL/GenBank/DDBJ databases">
        <title>Yersinia pestis Nepal516A whole genome shotgun sequencing project.</title>
        <authorList>
            <person name="Plunkett G. III"/>
            <person name="Anderson B.D."/>
            <person name="Baumler D.J."/>
            <person name="Burland V."/>
            <person name="Cabot E.L."/>
            <person name="Glasner J.D."/>
            <person name="Mau B."/>
            <person name="Neeno-Eckwall E."/>
            <person name="Perna N.T."/>
            <person name="Munk A.C."/>
            <person name="Tapia R."/>
            <person name="Green L.D."/>
            <person name="Rogers Y.C."/>
            <person name="Detter J.C."/>
            <person name="Bruce D.C."/>
            <person name="Brettin T.S."/>
        </authorList>
    </citation>
    <scope>NUCLEOTIDE SEQUENCE [LARGE SCALE GENOMIC DNA]</scope>
    <source>
        <strain>Nepal516</strain>
    </source>
</reference>
<accession>Q1CL26</accession>
<accession>C4GQQ1</accession>
<sequence length="320" mass="36185">MMQSKPGVLMVNLGTPDAPTSKAIKRYLAEFLSDRRVVDTSPLLWWPLLHGVILPLRSPRVAKLYQSVWMEEGSPLLVYSRRQQKALAARMPDIPVELGMSYGSPNLPEAIEKLLAQGVTNLVILPLYPQYSCSTSAAVWDAVARVLKGYRRLPSISFIRDYAEHPAYISALKQSVERSFAEHGQPDRLVMSFHGIPKRYAQLGDDYPIRCEDTSRALRAALPLPAEKIIMTYQSRFGREPWLTPYTDETLKSLPSQGVKHIQLICPGFSADCLETLEEIKEQNREFFLHAGGEKFEYIPALNDDEGHIALLEQLIRHNI</sequence>
<dbReference type="EC" id="4.98.1.1" evidence="1"/>
<dbReference type="EMBL" id="CP000305">
    <property type="protein sequence ID" value="ABG17304.1"/>
    <property type="molecule type" value="Genomic_DNA"/>
</dbReference>
<dbReference type="EMBL" id="ACNQ01000008">
    <property type="protein sequence ID" value="EEO77392.1"/>
    <property type="molecule type" value="Genomic_DNA"/>
</dbReference>
<dbReference type="RefSeq" id="WP_002208599.1">
    <property type="nucleotide sequence ID" value="NZ_ACNQ01000008.1"/>
</dbReference>
<dbReference type="SMR" id="Q1CL26"/>
<dbReference type="GeneID" id="57975594"/>
<dbReference type="KEGG" id="ypn:YPN_0972"/>
<dbReference type="HOGENOM" id="CLU_018884_0_0_6"/>
<dbReference type="UniPathway" id="UPA00252">
    <property type="reaction ID" value="UER00325"/>
</dbReference>
<dbReference type="Proteomes" id="UP000008936">
    <property type="component" value="Chromosome"/>
</dbReference>
<dbReference type="GO" id="GO:0005737">
    <property type="term" value="C:cytoplasm"/>
    <property type="evidence" value="ECO:0007669"/>
    <property type="project" value="UniProtKB-SubCell"/>
</dbReference>
<dbReference type="GO" id="GO:0004325">
    <property type="term" value="F:ferrochelatase activity"/>
    <property type="evidence" value="ECO:0007669"/>
    <property type="project" value="UniProtKB-UniRule"/>
</dbReference>
<dbReference type="GO" id="GO:0046872">
    <property type="term" value="F:metal ion binding"/>
    <property type="evidence" value="ECO:0007669"/>
    <property type="project" value="UniProtKB-KW"/>
</dbReference>
<dbReference type="GO" id="GO:0006783">
    <property type="term" value="P:heme biosynthetic process"/>
    <property type="evidence" value="ECO:0007669"/>
    <property type="project" value="UniProtKB-UniRule"/>
</dbReference>
<dbReference type="CDD" id="cd00419">
    <property type="entry name" value="Ferrochelatase_C"/>
    <property type="match status" value="1"/>
</dbReference>
<dbReference type="CDD" id="cd03411">
    <property type="entry name" value="Ferrochelatase_N"/>
    <property type="match status" value="1"/>
</dbReference>
<dbReference type="FunFam" id="3.40.50.1400:FF:000004">
    <property type="entry name" value="Ferrochelatase"/>
    <property type="match status" value="1"/>
</dbReference>
<dbReference type="Gene3D" id="3.40.50.1400">
    <property type="match status" value="2"/>
</dbReference>
<dbReference type="HAMAP" id="MF_00323">
    <property type="entry name" value="Ferrochelatase"/>
    <property type="match status" value="1"/>
</dbReference>
<dbReference type="InterPro" id="IPR001015">
    <property type="entry name" value="Ferrochelatase"/>
</dbReference>
<dbReference type="InterPro" id="IPR019772">
    <property type="entry name" value="Ferrochelatase_AS"/>
</dbReference>
<dbReference type="InterPro" id="IPR033644">
    <property type="entry name" value="Ferrochelatase_C"/>
</dbReference>
<dbReference type="InterPro" id="IPR033659">
    <property type="entry name" value="Ferrochelatase_N"/>
</dbReference>
<dbReference type="NCBIfam" id="TIGR00109">
    <property type="entry name" value="hemH"/>
    <property type="match status" value="1"/>
</dbReference>
<dbReference type="PANTHER" id="PTHR11108">
    <property type="entry name" value="FERROCHELATASE"/>
    <property type="match status" value="1"/>
</dbReference>
<dbReference type="PANTHER" id="PTHR11108:SF1">
    <property type="entry name" value="FERROCHELATASE, MITOCHONDRIAL"/>
    <property type="match status" value="1"/>
</dbReference>
<dbReference type="Pfam" id="PF00762">
    <property type="entry name" value="Ferrochelatase"/>
    <property type="match status" value="1"/>
</dbReference>
<dbReference type="SUPFAM" id="SSF53800">
    <property type="entry name" value="Chelatase"/>
    <property type="match status" value="1"/>
</dbReference>
<dbReference type="PROSITE" id="PS00534">
    <property type="entry name" value="FERROCHELATASE"/>
    <property type="match status" value="1"/>
</dbReference>